<name>RL332_STAAM</name>
<proteinExistence type="inferred from homology"/>
<accession>P66230</accession>
<accession>Q99UE1</accession>
<comment type="similarity">
    <text evidence="2">Belongs to the bacterial ribosomal protein bL33 family.</text>
</comment>
<dbReference type="EMBL" id="BA000017">
    <property type="protein sequence ID" value="BAB57497.1"/>
    <property type="molecule type" value="Genomic_DNA"/>
</dbReference>
<dbReference type="SMR" id="P66230"/>
<dbReference type="KEGG" id="sav:SAV1335"/>
<dbReference type="HOGENOM" id="CLU_190949_0_2_9"/>
<dbReference type="PhylomeDB" id="P66230"/>
<dbReference type="Proteomes" id="UP000002481">
    <property type="component" value="Chromosome"/>
</dbReference>
<dbReference type="GO" id="GO:0005737">
    <property type="term" value="C:cytoplasm"/>
    <property type="evidence" value="ECO:0007669"/>
    <property type="project" value="UniProtKB-ARBA"/>
</dbReference>
<dbReference type="GO" id="GO:1990904">
    <property type="term" value="C:ribonucleoprotein complex"/>
    <property type="evidence" value="ECO:0007669"/>
    <property type="project" value="UniProtKB-KW"/>
</dbReference>
<dbReference type="GO" id="GO:0005840">
    <property type="term" value="C:ribosome"/>
    <property type="evidence" value="ECO:0007669"/>
    <property type="project" value="UniProtKB-KW"/>
</dbReference>
<dbReference type="GO" id="GO:0003735">
    <property type="term" value="F:structural constituent of ribosome"/>
    <property type="evidence" value="ECO:0007669"/>
    <property type="project" value="InterPro"/>
</dbReference>
<dbReference type="GO" id="GO:0006412">
    <property type="term" value="P:translation"/>
    <property type="evidence" value="ECO:0007669"/>
    <property type="project" value="UniProtKB-UniRule"/>
</dbReference>
<dbReference type="Gene3D" id="2.20.28.120">
    <property type="entry name" value="Ribosomal protein L33"/>
    <property type="match status" value="1"/>
</dbReference>
<dbReference type="HAMAP" id="MF_00294">
    <property type="entry name" value="Ribosomal_bL33"/>
    <property type="match status" value="1"/>
</dbReference>
<dbReference type="InterPro" id="IPR001705">
    <property type="entry name" value="Ribosomal_bL33"/>
</dbReference>
<dbReference type="InterPro" id="IPR018264">
    <property type="entry name" value="Ribosomal_bL33_CS"/>
</dbReference>
<dbReference type="InterPro" id="IPR038584">
    <property type="entry name" value="Ribosomal_bL33_sf"/>
</dbReference>
<dbReference type="InterPro" id="IPR011332">
    <property type="entry name" value="Ribosomal_zn-bd"/>
</dbReference>
<dbReference type="NCBIfam" id="NF001764">
    <property type="entry name" value="PRK00504.1"/>
    <property type="match status" value="1"/>
</dbReference>
<dbReference type="NCBIfam" id="NF001860">
    <property type="entry name" value="PRK00595.1"/>
    <property type="match status" value="1"/>
</dbReference>
<dbReference type="NCBIfam" id="TIGR01023">
    <property type="entry name" value="rpmG_bact"/>
    <property type="match status" value="1"/>
</dbReference>
<dbReference type="PANTHER" id="PTHR43168">
    <property type="entry name" value="50S RIBOSOMAL PROTEIN L33, CHLOROPLASTIC"/>
    <property type="match status" value="1"/>
</dbReference>
<dbReference type="PANTHER" id="PTHR43168:SF2">
    <property type="entry name" value="LARGE RIBOSOMAL SUBUNIT PROTEIN BL33C"/>
    <property type="match status" value="1"/>
</dbReference>
<dbReference type="Pfam" id="PF00471">
    <property type="entry name" value="Ribosomal_L33"/>
    <property type="match status" value="1"/>
</dbReference>
<dbReference type="SUPFAM" id="SSF57829">
    <property type="entry name" value="Zn-binding ribosomal proteins"/>
    <property type="match status" value="1"/>
</dbReference>
<dbReference type="PROSITE" id="PS00582">
    <property type="entry name" value="RIBOSOMAL_L33"/>
    <property type="match status" value="1"/>
</dbReference>
<evidence type="ECO:0000255" key="1">
    <source>
        <dbReference type="HAMAP-Rule" id="MF_00294"/>
    </source>
</evidence>
<evidence type="ECO:0000305" key="2"/>
<organism>
    <name type="scientific">Staphylococcus aureus (strain Mu50 / ATCC 700699)</name>
    <dbReference type="NCBI Taxonomy" id="158878"/>
    <lineage>
        <taxon>Bacteria</taxon>
        <taxon>Bacillati</taxon>
        <taxon>Bacillota</taxon>
        <taxon>Bacilli</taxon>
        <taxon>Bacillales</taxon>
        <taxon>Staphylococcaceae</taxon>
        <taxon>Staphylococcus</taxon>
    </lineage>
</organism>
<feature type="chain" id="PRO_0000170214" description="Large ribosomal subunit protein bL33B">
    <location>
        <begin position="1"/>
        <end position="49"/>
    </location>
</feature>
<reference key="1">
    <citation type="journal article" date="2001" name="Lancet">
        <title>Whole genome sequencing of meticillin-resistant Staphylococcus aureus.</title>
        <authorList>
            <person name="Kuroda M."/>
            <person name="Ohta T."/>
            <person name="Uchiyama I."/>
            <person name="Baba T."/>
            <person name="Yuzawa H."/>
            <person name="Kobayashi I."/>
            <person name="Cui L."/>
            <person name="Oguchi A."/>
            <person name="Aoki K."/>
            <person name="Nagai Y."/>
            <person name="Lian J.-Q."/>
            <person name="Ito T."/>
            <person name="Kanamori M."/>
            <person name="Matsumaru H."/>
            <person name="Maruyama A."/>
            <person name="Murakami H."/>
            <person name="Hosoyama A."/>
            <person name="Mizutani-Ui Y."/>
            <person name="Takahashi N.K."/>
            <person name="Sawano T."/>
            <person name="Inoue R."/>
            <person name="Kaito C."/>
            <person name="Sekimizu K."/>
            <person name="Hirakawa H."/>
            <person name="Kuhara S."/>
            <person name="Goto S."/>
            <person name="Yabuzaki J."/>
            <person name="Kanehisa M."/>
            <person name="Yamashita A."/>
            <person name="Oshima K."/>
            <person name="Furuya K."/>
            <person name="Yoshino C."/>
            <person name="Shiba T."/>
            <person name="Hattori M."/>
            <person name="Ogasawara N."/>
            <person name="Hayashi H."/>
            <person name="Hiramatsu K."/>
        </authorList>
    </citation>
    <scope>NUCLEOTIDE SEQUENCE [LARGE SCALE GENOMIC DNA]</scope>
    <source>
        <strain>Mu50 / ATCC 700699</strain>
    </source>
</reference>
<gene>
    <name type="primary">rpmG2</name>
    <name type="ordered locus">SAV1335</name>
</gene>
<keyword id="KW-0687">Ribonucleoprotein</keyword>
<keyword id="KW-0689">Ribosomal protein</keyword>
<sequence length="49" mass="5932">MRVNVTLACTECGDRNYITTKNKRNNPERIEMKKYCPRLNKYTLHRETK</sequence>
<protein>
    <recommendedName>
        <fullName evidence="1">Large ribosomal subunit protein bL33B</fullName>
    </recommendedName>
    <alternativeName>
        <fullName>50S ribosomal protein L33 2</fullName>
    </alternativeName>
</protein>